<gene>
    <name evidence="2" type="primary">infB</name>
    <name type="ordered locus">Nmul_A1864</name>
</gene>
<feature type="chain" id="PRO_0000335492" description="Translation initiation factor IF-2">
    <location>
        <begin position="1"/>
        <end position="876"/>
    </location>
</feature>
<feature type="domain" description="tr-type G">
    <location>
        <begin position="378"/>
        <end position="547"/>
    </location>
</feature>
<feature type="region of interest" description="Disordered" evidence="3">
    <location>
        <begin position="164"/>
        <end position="288"/>
    </location>
</feature>
<feature type="region of interest" description="G1" evidence="1">
    <location>
        <begin position="387"/>
        <end position="394"/>
    </location>
</feature>
<feature type="region of interest" description="G2" evidence="1">
    <location>
        <begin position="412"/>
        <end position="416"/>
    </location>
</feature>
<feature type="region of interest" description="G3" evidence="1">
    <location>
        <begin position="433"/>
        <end position="436"/>
    </location>
</feature>
<feature type="region of interest" description="G4" evidence="1">
    <location>
        <begin position="487"/>
        <end position="490"/>
    </location>
</feature>
<feature type="region of interest" description="G5" evidence="1">
    <location>
        <begin position="523"/>
        <end position="525"/>
    </location>
</feature>
<feature type="compositionally biased region" description="Low complexity" evidence="3">
    <location>
        <begin position="179"/>
        <end position="219"/>
    </location>
</feature>
<feature type="compositionally biased region" description="Basic and acidic residues" evidence="3">
    <location>
        <begin position="244"/>
        <end position="259"/>
    </location>
</feature>
<feature type="binding site" evidence="2">
    <location>
        <begin position="387"/>
        <end position="394"/>
    </location>
    <ligand>
        <name>GTP</name>
        <dbReference type="ChEBI" id="CHEBI:37565"/>
    </ligand>
</feature>
<feature type="binding site" evidence="2">
    <location>
        <begin position="433"/>
        <end position="437"/>
    </location>
    <ligand>
        <name>GTP</name>
        <dbReference type="ChEBI" id="CHEBI:37565"/>
    </ligand>
</feature>
<feature type="binding site" evidence="2">
    <location>
        <begin position="487"/>
        <end position="490"/>
    </location>
    <ligand>
        <name>GTP</name>
        <dbReference type="ChEBI" id="CHEBI:37565"/>
    </ligand>
</feature>
<name>IF2_NITMU</name>
<sequence length="876" mass="95075">MSQMNVEQFASELGVLPTVLLEQLQAAGVRKHMTEDSLTEKDKTQLLEYLRKIHGAKEEKGRISLPRRQTSEIKKADSTGKPRSIQVEVRKKRVFVKGVDLPVERKTAEIPAPAAPSVPPVRTPVIDAAQQALRQEEARRQAELIARQAAELREKRLRERPPVVEIKEPEEPAPPFVPAAPVAGPEAVPVAPETPSAAPGETVAAVEAEAAPSQPASTEGTLHKPAVKPEEKADKKKKPAKQVVWKEEKVEKRGLKTRGDLSGAKGGWRARKDKHGRTEEPAPHAFSAPTEPVVHEVLVPETISVGALAQKMSIKAAEVIKALMKMGNMVTINQMLDQETAMIVVEELGHVAKYAALDSPESFLADTEIAPSELKMEARAPVVTVMGHVDHGKTSLLDYIRRTRVASGEAGGITQHIGAYHVETERGMVTFLDTPGHEAFTAMRARGAKVTDLVILVVAADDGVMPQTVEAIHHAKAGKVPIVVAMTKIDKPEANPERIRQELVTQEVVPEDWGGETMFVEVSAKTGQGIDDLLESVLLQAEVLELKAPKDAPAKGIVIESRLDKGRGPVATMLVQSGTLKRGDILLAGAAYGRVRAMLDESGKQVEQAGPSIPVEIQGLSEVPVAGESVVALTDERKAREIALFRQGKFRDVKLAKQQAAKLENVFEQRGEVKVLSLIIKADVQGSYEALTHALQQLSTDEVKVNIIHSGVGAITESDINLALASKAVVIGFNSRADAVARKLINSAGVDVRYYSIIYEAVDEIKAALSGMMAPERKENITGLLEIREVFRISKVGAVAGCLVQEGFVRRGSLVRVIRNGQVIHTGELDSLKRFKDDVKEVRAGFECGLSLKNFNDIQVGDQLETYEIQVIARTL</sequence>
<reference key="1">
    <citation type="submission" date="2005-08" db="EMBL/GenBank/DDBJ databases">
        <title>Complete sequence of chromosome 1 of Nitrosospira multiformis ATCC 25196.</title>
        <authorList>
            <person name="Copeland A."/>
            <person name="Lucas S."/>
            <person name="Lapidus A."/>
            <person name="Barry K."/>
            <person name="Detter J.C."/>
            <person name="Glavina T."/>
            <person name="Hammon N."/>
            <person name="Israni S."/>
            <person name="Pitluck S."/>
            <person name="Chain P."/>
            <person name="Malfatti S."/>
            <person name="Shin M."/>
            <person name="Vergez L."/>
            <person name="Schmutz J."/>
            <person name="Larimer F."/>
            <person name="Land M."/>
            <person name="Hauser L."/>
            <person name="Kyrpides N."/>
            <person name="Lykidis A."/>
            <person name="Richardson P."/>
        </authorList>
    </citation>
    <scope>NUCLEOTIDE SEQUENCE [LARGE SCALE GENOMIC DNA]</scope>
    <source>
        <strain>ATCC 25196 / NCIMB 11849 / C 71</strain>
    </source>
</reference>
<proteinExistence type="inferred from homology"/>
<evidence type="ECO:0000250" key="1"/>
<evidence type="ECO:0000255" key="2">
    <source>
        <dbReference type="HAMAP-Rule" id="MF_00100"/>
    </source>
</evidence>
<evidence type="ECO:0000256" key="3">
    <source>
        <dbReference type="SAM" id="MobiDB-lite"/>
    </source>
</evidence>
<comment type="function">
    <text evidence="2">One of the essential components for the initiation of protein synthesis. Protects formylmethionyl-tRNA from spontaneous hydrolysis and promotes its binding to the 30S ribosomal subunits. Also involved in the hydrolysis of GTP during the formation of the 70S ribosomal complex.</text>
</comment>
<comment type="subcellular location">
    <subcellularLocation>
        <location evidence="2">Cytoplasm</location>
    </subcellularLocation>
</comment>
<comment type="similarity">
    <text evidence="2">Belongs to the TRAFAC class translation factor GTPase superfamily. Classic translation factor GTPase family. IF-2 subfamily.</text>
</comment>
<organism>
    <name type="scientific">Nitrosospira multiformis (strain ATCC 25196 / NCIMB 11849 / C 71)</name>
    <dbReference type="NCBI Taxonomy" id="323848"/>
    <lineage>
        <taxon>Bacteria</taxon>
        <taxon>Pseudomonadati</taxon>
        <taxon>Pseudomonadota</taxon>
        <taxon>Betaproteobacteria</taxon>
        <taxon>Nitrosomonadales</taxon>
        <taxon>Nitrosomonadaceae</taxon>
        <taxon>Nitrosospira</taxon>
    </lineage>
</organism>
<protein>
    <recommendedName>
        <fullName evidence="2">Translation initiation factor IF-2</fullName>
    </recommendedName>
</protein>
<dbReference type="EMBL" id="CP000103">
    <property type="protein sequence ID" value="ABB75159.1"/>
    <property type="molecule type" value="Genomic_DNA"/>
</dbReference>
<dbReference type="RefSeq" id="WP_011381179.1">
    <property type="nucleotide sequence ID" value="NC_007614.1"/>
</dbReference>
<dbReference type="SMR" id="Q2Y7W2"/>
<dbReference type="STRING" id="323848.Nmul_A1864"/>
<dbReference type="KEGG" id="nmu:Nmul_A1864"/>
<dbReference type="eggNOG" id="COG0532">
    <property type="taxonomic scope" value="Bacteria"/>
</dbReference>
<dbReference type="HOGENOM" id="CLU_006301_6_0_4"/>
<dbReference type="OrthoDB" id="9811804at2"/>
<dbReference type="Proteomes" id="UP000002718">
    <property type="component" value="Chromosome"/>
</dbReference>
<dbReference type="GO" id="GO:0005829">
    <property type="term" value="C:cytosol"/>
    <property type="evidence" value="ECO:0007669"/>
    <property type="project" value="TreeGrafter"/>
</dbReference>
<dbReference type="GO" id="GO:0005525">
    <property type="term" value="F:GTP binding"/>
    <property type="evidence" value="ECO:0007669"/>
    <property type="project" value="UniProtKB-KW"/>
</dbReference>
<dbReference type="GO" id="GO:0003924">
    <property type="term" value="F:GTPase activity"/>
    <property type="evidence" value="ECO:0007669"/>
    <property type="project" value="UniProtKB-UniRule"/>
</dbReference>
<dbReference type="GO" id="GO:0097216">
    <property type="term" value="F:guanosine tetraphosphate binding"/>
    <property type="evidence" value="ECO:0007669"/>
    <property type="project" value="UniProtKB-ARBA"/>
</dbReference>
<dbReference type="GO" id="GO:0003743">
    <property type="term" value="F:translation initiation factor activity"/>
    <property type="evidence" value="ECO:0007669"/>
    <property type="project" value="UniProtKB-UniRule"/>
</dbReference>
<dbReference type="CDD" id="cd01887">
    <property type="entry name" value="IF2_eIF5B"/>
    <property type="match status" value="1"/>
</dbReference>
<dbReference type="CDD" id="cd03702">
    <property type="entry name" value="IF2_mtIF2_II"/>
    <property type="match status" value="1"/>
</dbReference>
<dbReference type="CDD" id="cd03692">
    <property type="entry name" value="mtIF2_IVc"/>
    <property type="match status" value="1"/>
</dbReference>
<dbReference type="FunFam" id="2.40.30.10:FF:000007">
    <property type="entry name" value="Translation initiation factor IF-2"/>
    <property type="match status" value="1"/>
</dbReference>
<dbReference type="FunFam" id="2.40.30.10:FF:000008">
    <property type="entry name" value="Translation initiation factor IF-2"/>
    <property type="match status" value="1"/>
</dbReference>
<dbReference type="FunFam" id="3.40.50.10050:FF:000001">
    <property type="entry name" value="Translation initiation factor IF-2"/>
    <property type="match status" value="1"/>
</dbReference>
<dbReference type="FunFam" id="3.40.50.300:FF:000019">
    <property type="entry name" value="Translation initiation factor IF-2"/>
    <property type="match status" value="1"/>
</dbReference>
<dbReference type="Gene3D" id="3.40.50.300">
    <property type="entry name" value="P-loop containing nucleotide triphosphate hydrolases"/>
    <property type="match status" value="1"/>
</dbReference>
<dbReference type="Gene3D" id="3.30.56.50">
    <property type="entry name" value="Putative DNA-binding domain, N-terminal subdomain of bacterial translation initiation factor IF2"/>
    <property type="match status" value="1"/>
</dbReference>
<dbReference type="Gene3D" id="2.40.30.10">
    <property type="entry name" value="Translation factors"/>
    <property type="match status" value="2"/>
</dbReference>
<dbReference type="Gene3D" id="3.40.50.10050">
    <property type="entry name" value="Translation initiation factor IF- 2, domain 3"/>
    <property type="match status" value="1"/>
</dbReference>
<dbReference type="HAMAP" id="MF_00100_B">
    <property type="entry name" value="IF_2_B"/>
    <property type="match status" value="1"/>
</dbReference>
<dbReference type="InterPro" id="IPR009061">
    <property type="entry name" value="DNA-bd_dom_put_sf"/>
</dbReference>
<dbReference type="InterPro" id="IPR053905">
    <property type="entry name" value="EF-G-like_DII"/>
</dbReference>
<dbReference type="InterPro" id="IPR004161">
    <property type="entry name" value="EFTu-like_2"/>
</dbReference>
<dbReference type="InterPro" id="IPR013575">
    <property type="entry name" value="IF2_assoc_dom_bac"/>
</dbReference>
<dbReference type="InterPro" id="IPR044145">
    <property type="entry name" value="IF2_II"/>
</dbReference>
<dbReference type="InterPro" id="IPR006847">
    <property type="entry name" value="IF2_N"/>
</dbReference>
<dbReference type="InterPro" id="IPR027417">
    <property type="entry name" value="P-loop_NTPase"/>
</dbReference>
<dbReference type="InterPro" id="IPR005225">
    <property type="entry name" value="Small_GTP-bd"/>
</dbReference>
<dbReference type="InterPro" id="IPR000795">
    <property type="entry name" value="T_Tr_GTP-bd_dom"/>
</dbReference>
<dbReference type="InterPro" id="IPR000178">
    <property type="entry name" value="TF_IF2_bacterial-like"/>
</dbReference>
<dbReference type="InterPro" id="IPR015760">
    <property type="entry name" value="TIF_IF2"/>
</dbReference>
<dbReference type="InterPro" id="IPR023115">
    <property type="entry name" value="TIF_IF2_dom3"/>
</dbReference>
<dbReference type="InterPro" id="IPR036925">
    <property type="entry name" value="TIF_IF2_dom3_sf"/>
</dbReference>
<dbReference type="InterPro" id="IPR009000">
    <property type="entry name" value="Transl_B-barrel_sf"/>
</dbReference>
<dbReference type="NCBIfam" id="TIGR00487">
    <property type="entry name" value="IF-2"/>
    <property type="match status" value="1"/>
</dbReference>
<dbReference type="NCBIfam" id="TIGR00231">
    <property type="entry name" value="small_GTP"/>
    <property type="match status" value="1"/>
</dbReference>
<dbReference type="PANTHER" id="PTHR43381:SF5">
    <property type="entry name" value="TR-TYPE G DOMAIN-CONTAINING PROTEIN"/>
    <property type="match status" value="1"/>
</dbReference>
<dbReference type="PANTHER" id="PTHR43381">
    <property type="entry name" value="TRANSLATION INITIATION FACTOR IF-2-RELATED"/>
    <property type="match status" value="1"/>
</dbReference>
<dbReference type="Pfam" id="PF22042">
    <property type="entry name" value="EF-G_D2"/>
    <property type="match status" value="1"/>
</dbReference>
<dbReference type="Pfam" id="PF00009">
    <property type="entry name" value="GTP_EFTU"/>
    <property type="match status" value="1"/>
</dbReference>
<dbReference type="Pfam" id="PF03144">
    <property type="entry name" value="GTP_EFTU_D2"/>
    <property type="match status" value="1"/>
</dbReference>
<dbReference type="Pfam" id="PF11987">
    <property type="entry name" value="IF-2"/>
    <property type="match status" value="1"/>
</dbReference>
<dbReference type="Pfam" id="PF08364">
    <property type="entry name" value="IF2_assoc"/>
    <property type="match status" value="1"/>
</dbReference>
<dbReference type="Pfam" id="PF04760">
    <property type="entry name" value="IF2_N"/>
    <property type="match status" value="2"/>
</dbReference>
<dbReference type="SUPFAM" id="SSF52156">
    <property type="entry name" value="Initiation factor IF2/eIF5b, domain 3"/>
    <property type="match status" value="1"/>
</dbReference>
<dbReference type="SUPFAM" id="SSF52540">
    <property type="entry name" value="P-loop containing nucleoside triphosphate hydrolases"/>
    <property type="match status" value="1"/>
</dbReference>
<dbReference type="SUPFAM" id="SSF46955">
    <property type="entry name" value="Putative DNA-binding domain"/>
    <property type="match status" value="1"/>
</dbReference>
<dbReference type="SUPFAM" id="SSF50447">
    <property type="entry name" value="Translation proteins"/>
    <property type="match status" value="2"/>
</dbReference>
<dbReference type="PROSITE" id="PS51722">
    <property type="entry name" value="G_TR_2"/>
    <property type="match status" value="1"/>
</dbReference>
<dbReference type="PROSITE" id="PS01176">
    <property type="entry name" value="IF2"/>
    <property type="match status" value="1"/>
</dbReference>
<keyword id="KW-0963">Cytoplasm</keyword>
<keyword id="KW-0342">GTP-binding</keyword>
<keyword id="KW-0396">Initiation factor</keyword>
<keyword id="KW-0547">Nucleotide-binding</keyword>
<keyword id="KW-0648">Protein biosynthesis</keyword>
<keyword id="KW-1185">Reference proteome</keyword>
<accession>Q2Y7W2</accession>